<name>HMDH2_ASPFU</name>
<feature type="chain" id="PRO_0000454151" description="3-hydroxy-3-methylglutaryl-coenzyme A reductase 2">
    <location>
        <begin position="1"/>
        <end position="1062"/>
    </location>
</feature>
<feature type="topological domain" description="Cytoplasmic" evidence="8">
    <location>
        <begin position="1"/>
        <end position="34"/>
    </location>
</feature>
<feature type="transmembrane region" description="Helical" evidence="3">
    <location>
        <begin position="35"/>
        <end position="55"/>
    </location>
</feature>
<feature type="topological domain" description="Lumenal" evidence="8">
    <location>
        <begin position="56"/>
        <end position="230"/>
    </location>
</feature>
<feature type="transmembrane region" description="Helical" evidence="3">
    <location>
        <begin position="231"/>
        <end position="251"/>
    </location>
</feature>
<feature type="topological domain" description="Cytoplasmic" evidence="8">
    <location>
        <begin position="252"/>
        <end position="261"/>
    </location>
</feature>
<feature type="transmembrane region" description="Helical" evidence="3">
    <location>
        <begin position="262"/>
        <end position="282"/>
    </location>
</feature>
<feature type="topological domain" description="Lumenal" evidence="8">
    <location>
        <begin position="283"/>
        <end position="287"/>
    </location>
</feature>
<feature type="transmembrane region" description="Helical" evidence="3">
    <location>
        <begin position="288"/>
        <end position="308"/>
    </location>
</feature>
<feature type="topological domain" description="Cytoplasmic" evidence="8">
    <location>
        <begin position="309"/>
        <end position="355"/>
    </location>
</feature>
<feature type="transmembrane region" description="Helical" evidence="3">
    <location>
        <begin position="356"/>
        <end position="375"/>
    </location>
</feature>
<feature type="topological domain" description="Lumenal" evidence="8">
    <location>
        <begin position="376"/>
        <end position="377"/>
    </location>
</feature>
<feature type="transmembrane region" description="Helical" evidence="3">
    <location>
        <begin position="378"/>
        <end position="398"/>
    </location>
</feature>
<feature type="topological domain" description="Cytoplasmic" evidence="8">
    <location>
        <begin position="399"/>
        <end position="450"/>
    </location>
</feature>
<feature type="transmembrane region" description="Helical" evidence="3">
    <location>
        <begin position="451"/>
        <end position="471"/>
    </location>
</feature>
<feature type="topological domain" description="Lumenal" evidence="8">
    <location>
        <begin position="472"/>
        <end position="564"/>
    </location>
</feature>
<feature type="transmembrane region" description="Helical" evidence="3">
    <location>
        <begin position="565"/>
        <end position="585"/>
    </location>
</feature>
<feature type="topological domain" description="Cytoplasmic" evidence="8">
    <location>
        <begin position="586"/>
        <end position="1062"/>
    </location>
</feature>
<feature type="domain" description="SSD" evidence="4">
    <location>
        <begin position="233"/>
        <end position="403"/>
    </location>
</feature>
<feature type="active site" description="Charge relay system" evidence="1">
    <location>
        <position position="744"/>
    </location>
</feature>
<feature type="active site" description="Charge relay system" evidence="1">
    <location>
        <position position="877"/>
    </location>
</feature>
<feature type="active site" description="Charge relay system" evidence="1">
    <location>
        <position position="953"/>
    </location>
</feature>
<feature type="active site" description="Proton donor" evidence="6">
    <location>
        <position position="1049"/>
    </location>
</feature>
<feature type="binding site" evidence="1">
    <location>
        <begin position="750"/>
        <end position="756"/>
    </location>
    <ligand>
        <name>CoA</name>
        <dbReference type="ChEBI" id="CHEBI:57287"/>
    </ligand>
</feature>
<feature type="binding site" evidence="1">
    <location>
        <begin position="811"/>
        <end position="813"/>
    </location>
    <ligand>
        <name>NADP(+)</name>
        <dbReference type="ChEBI" id="CHEBI:58349"/>
    </ligand>
</feature>
<feature type="binding site" evidence="1">
    <location>
        <begin position="838"/>
        <end position="846"/>
    </location>
    <ligand>
        <name>NADP(+)</name>
        <dbReference type="ChEBI" id="CHEBI:58349"/>
    </ligand>
</feature>
<feature type="binding site" evidence="1">
    <location>
        <begin position="906"/>
        <end position="908"/>
    </location>
    <ligand>
        <name>CoA</name>
        <dbReference type="ChEBI" id="CHEBI:57287"/>
    </ligand>
</feature>
<feature type="binding site" evidence="1">
    <location>
        <begin position="1048"/>
        <end position="1049"/>
    </location>
    <ligand>
        <name>CoA</name>
        <dbReference type="ChEBI" id="CHEBI:57287"/>
    </ligand>
</feature>
<feature type="binding site" evidence="1">
    <location>
        <begin position="1053"/>
        <end position="1054"/>
    </location>
    <ligand>
        <name>NADP(+)</name>
        <dbReference type="ChEBI" id="CHEBI:58349"/>
    </ligand>
</feature>
<feature type="glycosylation site" description="N-linked (GlcNAc...) asparagine" evidence="5">
    <location>
        <position position="61"/>
    </location>
</feature>
<feature type="glycosylation site" description="N-linked (GlcNAc...) asparagine" evidence="5">
    <location>
        <position position="484"/>
    </location>
</feature>
<protein>
    <recommendedName>
        <fullName evidence="7">3-hydroxy-3-methylglutaryl-coenzyme A reductase 2</fullName>
        <shortName evidence="7">HMG-CoA reductase 2</shortName>
        <ecNumber evidence="9">1.1.1.34</ecNumber>
    </recommendedName>
    <alternativeName>
        <fullName evidence="7">Ergosterol biosynthesis protein hmg2</fullName>
    </alternativeName>
</protein>
<accession>Q4WSY2</accession>
<gene>
    <name evidence="7" type="primary">hmg2</name>
    <name type="ORF">AFUA_1G11230</name>
</gene>
<organism>
    <name type="scientific">Aspergillus fumigatus (strain ATCC MYA-4609 / CBS 101355 / FGSC A1100 / Af293)</name>
    <name type="common">Neosartorya fumigata</name>
    <dbReference type="NCBI Taxonomy" id="330879"/>
    <lineage>
        <taxon>Eukaryota</taxon>
        <taxon>Fungi</taxon>
        <taxon>Dikarya</taxon>
        <taxon>Ascomycota</taxon>
        <taxon>Pezizomycotina</taxon>
        <taxon>Eurotiomycetes</taxon>
        <taxon>Eurotiomycetidae</taxon>
        <taxon>Eurotiales</taxon>
        <taxon>Aspergillaceae</taxon>
        <taxon>Aspergillus</taxon>
        <taxon>Aspergillus subgen. Fumigati</taxon>
    </lineage>
</organism>
<comment type="function">
    <text evidence="2 9 10">HMG-CoA reductase; part of the first module of ergosterol biosynthesis pathway that includes the early steps of the pathway, conserved across all eukaryotes, and which results in the formation of mevalonate from acetyl-coenzyme A (acetyl-CoA) (By similarity). Hmg1 and hmg2 catalyze the reduction of hydroxymethylglutaryl-CoA (HMG-CoA) to mevalonate (By similarity). The first module starts with the action of the cytosolic acetyl-CoA acetyltransferase erg10B that catalyzes the formation of acetoacetyl-CoA. The hydroxymethylglutaryl-CoA synthases erg13A and erg13B then condense acetyl-CoA with acetoacetyl-CoA to form HMG-CoA. The rate-limiting step of the early module is the reduction to mevalonate by the 3-hydroxy-3-methylglutaryl-coenzyme A (HMG-CoA) reductases hmg1 and hmg2. Mevalonate is also a precursor for the extracellular siderophore triacetylfusarinine C (TAFC) (Probable) (PubMed:16110826, PubMed:22106303).</text>
</comment>
<comment type="catalytic activity">
    <reaction evidence="6 9">
        <text>(R)-mevalonate + 2 NADP(+) + CoA = (3S)-3-hydroxy-3-methylglutaryl-CoA + 2 NADPH + 2 H(+)</text>
        <dbReference type="Rhea" id="RHEA:15989"/>
        <dbReference type="ChEBI" id="CHEBI:15378"/>
        <dbReference type="ChEBI" id="CHEBI:36464"/>
        <dbReference type="ChEBI" id="CHEBI:43074"/>
        <dbReference type="ChEBI" id="CHEBI:57287"/>
        <dbReference type="ChEBI" id="CHEBI:57783"/>
        <dbReference type="ChEBI" id="CHEBI:58349"/>
        <dbReference type="EC" id="1.1.1.34"/>
    </reaction>
    <physiologicalReaction direction="right-to-left" evidence="9">
        <dbReference type="Rhea" id="RHEA:15991"/>
    </physiologicalReaction>
</comment>
<comment type="pathway">
    <text evidence="9">Metabolic intermediate biosynthesis; (R)-mevalonate biosynthesis; (R)-mevalonate from acetyl-CoA: step 3/3.</text>
</comment>
<comment type="subcellular location">
    <subcellularLocation>
        <location evidence="8">Endoplasmic reticulum membrane</location>
        <topology evidence="3">Multi-pass membrane protein</topology>
    </subcellularLocation>
</comment>
<comment type="similarity">
    <text evidence="8">Belongs to the HMG-CoA reductase family.</text>
</comment>
<dbReference type="EC" id="1.1.1.34" evidence="9"/>
<dbReference type="EMBL" id="AAHF01000004">
    <property type="protein sequence ID" value="EAL90450.1"/>
    <property type="molecule type" value="Genomic_DNA"/>
</dbReference>
<dbReference type="RefSeq" id="XP_752488.1">
    <property type="nucleotide sequence ID" value="XM_747395.1"/>
</dbReference>
<dbReference type="SMR" id="Q4WSY2"/>
<dbReference type="FunCoup" id="Q4WSY2">
    <property type="interactions" value="296"/>
</dbReference>
<dbReference type="STRING" id="330879.Q4WSY2"/>
<dbReference type="GlyCosmos" id="Q4WSY2">
    <property type="glycosylation" value="2 sites, No reported glycans"/>
</dbReference>
<dbReference type="EnsemblFungi" id="EAL90450">
    <property type="protein sequence ID" value="EAL90450"/>
    <property type="gene ID" value="AFUA_1G11230"/>
</dbReference>
<dbReference type="GeneID" id="3510314"/>
<dbReference type="KEGG" id="afm:AFUA_1G11230"/>
<dbReference type="eggNOG" id="KOG2480">
    <property type="taxonomic scope" value="Eukaryota"/>
</dbReference>
<dbReference type="HOGENOM" id="CLU_001734_0_0_1"/>
<dbReference type="InParanoid" id="Q4WSY2"/>
<dbReference type="OMA" id="AGPMMID"/>
<dbReference type="OrthoDB" id="310654at2759"/>
<dbReference type="UniPathway" id="UPA00058">
    <property type="reaction ID" value="UER00103"/>
</dbReference>
<dbReference type="Proteomes" id="UP000002530">
    <property type="component" value="Chromosome 1"/>
</dbReference>
<dbReference type="GO" id="GO:0005789">
    <property type="term" value="C:endoplasmic reticulum membrane"/>
    <property type="evidence" value="ECO:0000318"/>
    <property type="project" value="GO_Central"/>
</dbReference>
<dbReference type="GO" id="GO:0005778">
    <property type="term" value="C:peroxisomal membrane"/>
    <property type="evidence" value="ECO:0000318"/>
    <property type="project" value="GO_Central"/>
</dbReference>
<dbReference type="GO" id="GO:0004420">
    <property type="term" value="F:hydroxymethylglutaryl-CoA reductase (NADPH) activity"/>
    <property type="evidence" value="ECO:0000318"/>
    <property type="project" value="GO_Central"/>
</dbReference>
<dbReference type="GO" id="GO:0015936">
    <property type="term" value="P:coenzyme A metabolic process"/>
    <property type="evidence" value="ECO:0007669"/>
    <property type="project" value="InterPro"/>
</dbReference>
<dbReference type="GO" id="GO:0006696">
    <property type="term" value="P:ergosterol biosynthetic process"/>
    <property type="evidence" value="ECO:0000318"/>
    <property type="project" value="GO_Central"/>
</dbReference>
<dbReference type="GO" id="GO:0008299">
    <property type="term" value="P:isoprenoid biosynthetic process"/>
    <property type="evidence" value="ECO:0000318"/>
    <property type="project" value="GO_Central"/>
</dbReference>
<dbReference type="CDD" id="cd00643">
    <property type="entry name" value="HMG-CoA_reductase_classI"/>
    <property type="match status" value="1"/>
</dbReference>
<dbReference type="FunFam" id="1.10.3270.10:FF:000001">
    <property type="entry name" value="3-hydroxy-3-methylglutaryl coenzyme A reductase"/>
    <property type="match status" value="1"/>
</dbReference>
<dbReference type="FunFam" id="3.30.70.420:FF:000001">
    <property type="entry name" value="3-hydroxy-3-methylglutaryl coenzyme A reductase"/>
    <property type="match status" value="1"/>
</dbReference>
<dbReference type="FunFam" id="3.90.770.10:FF:000001">
    <property type="entry name" value="3-hydroxy-3-methylglutaryl coenzyme A reductase"/>
    <property type="match status" value="1"/>
</dbReference>
<dbReference type="Gene3D" id="3.90.770.10">
    <property type="entry name" value="3-hydroxy-3-methylglutaryl-coenzyme A Reductase, Chain A, domain 2"/>
    <property type="match status" value="1"/>
</dbReference>
<dbReference type="Gene3D" id="1.10.3270.10">
    <property type="entry name" value="HMGR, N-terminal domain"/>
    <property type="match status" value="1"/>
</dbReference>
<dbReference type="Gene3D" id="3.30.70.420">
    <property type="entry name" value="Hydroxymethylglutaryl-CoA reductase, class I/II, NAD/NADP-binding domain"/>
    <property type="match status" value="1"/>
</dbReference>
<dbReference type="InterPro" id="IPR025583">
    <property type="entry name" value="HMG-CoA_N_dom"/>
</dbReference>
<dbReference type="InterPro" id="IPR002202">
    <property type="entry name" value="HMG_CoA_Rdtase"/>
</dbReference>
<dbReference type="InterPro" id="IPR023074">
    <property type="entry name" value="HMG_CoA_Rdtase_cat_sf"/>
</dbReference>
<dbReference type="InterPro" id="IPR023076">
    <property type="entry name" value="HMG_CoA_Rdtase_CS"/>
</dbReference>
<dbReference type="InterPro" id="IPR004554">
    <property type="entry name" value="HMG_CoA_Rdtase_eu_arc"/>
</dbReference>
<dbReference type="InterPro" id="IPR023282">
    <property type="entry name" value="HMG_CoA_Rdtase_N"/>
</dbReference>
<dbReference type="InterPro" id="IPR009023">
    <property type="entry name" value="HMG_CoA_Rdtase_NAD(P)-bd_sf"/>
</dbReference>
<dbReference type="InterPro" id="IPR009029">
    <property type="entry name" value="HMG_CoA_Rdtase_sub-bd_dom_sf"/>
</dbReference>
<dbReference type="InterPro" id="IPR053958">
    <property type="entry name" value="HMGCR/SNAP/NPC1-like_SSD"/>
</dbReference>
<dbReference type="InterPro" id="IPR000731">
    <property type="entry name" value="SSD"/>
</dbReference>
<dbReference type="NCBIfam" id="TIGR00533">
    <property type="entry name" value="HMG_CoA_R_NADP"/>
    <property type="match status" value="1"/>
</dbReference>
<dbReference type="PANTHER" id="PTHR10572">
    <property type="entry name" value="3-HYDROXY-3-METHYLGLUTARYL-COENZYME A REDUCTASE"/>
    <property type="match status" value="1"/>
</dbReference>
<dbReference type="PANTHER" id="PTHR10572:SF24">
    <property type="entry name" value="3-HYDROXY-3-METHYLGLUTARYL-COENZYME A REDUCTASE"/>
    <property type="match status" value="1"/>
</dbReference>
<dbReference type="Pfam" id="PF00368">
    <property type="entry name" value="HMG-CoA_red"/>
    <property type="match status" value="1"/>
</dbReference>
<dbReference type="Pfam" id="PF13323">
    <property type="entry name" value="HPIH"/>
    <property type="match status" value="1"/>
</dbReference>
<dbReference type="Pfam" id="PF12349">
    <property type="entry name" value="Sterol-sensing"/>
    <property type="match status" value="1"/>
</dbReference>
<dbReference type="PRINTS" id="PR00071">
    <property type="entry name" value="HMGCOARDTASE"/>
</dbReference>
<dbReference type="SUPFAM" id="SSF55035">
    <property type="entry name" value="NAD-binding domain of HMG-CoA reductase"/>
    <property type="match status" value="1"/>
</dbReference>
<dbReference type="SUPFAM" id="SSF56542">
    <property type="entry name" value="Substrate-binding domain of HMG-CoA reductase"/>
    <property type="match status" value="1"/>
</dbReference>
<dbReference type="PROSITE" id="PS00066">
    <property type="entry name" value="HMG_COA_REDUCTASE_1"/>
    <property type="match status" value="1"/>
</dbReference>
<dbReference type="PROSITE" id="PS00318">
    <property type="entry name" value="HMG_COA_REDUCTASE_2"/>
    <property type="match status" value="1"/>
</dbReference>
<dbReference type="PROSITE" id="PS50065">
    <property type="entry name" value="HMG_COA_REDUCTASE_4"/>
    <property type="match status" value="1"/>
</dbReference>
<dbReference type="PROSITE" id="PS50156">
    <property type="entry name" value="SSD"/>
    <property type="match status" value="1"/>
</dbReference>
<sequence length="1062" mass="115278">MAPTNTKDSDTPGWLHRHGTSVLGSVARQACKQPIYTLVITALLATMTYTSLLEGSLYNANLTRLSNSHLNQLDVTDFLQGSRSLRLGKATAWQWETDDESMSDQEVRPSFFLDPVASHLALITLVFPTSENNPGISAVQESIISDLAAAQLVSRTPSVLSSTFRETSITLSVPYNNLEEVLRKTQNFPQPEAEHSWTLKNAGKCNSGPKLRLWLIDVLASFVGLIKHAQIIDIIIMLLAYLAMHLTFLSLFMSMRQLGSRFWLAYSVLLSGFFSLFFGLKVTTSSGVSTSMITLSECLPILVIIVGFEKPIRLTRAVLRAATESYLPAKPMARRSTPEAIEVAIMREGWRIVRDYAIEIAILAAGATSRVQGALPQFCFLAAWILLFDSLLLFTFYISVLCVKLEITRIRKHVEPRRALEDDDISTGNQDFDSRVFGCKVKAANISRFKFLMVGGFVLFNVLQLSSLTYGNVRVSDWMPYLSNLSNTLMPAPINPYRVARNGLDDIYVASRANNIETRVTVLPPIKYVLQSQSRHCRDNFAGPLCDTLRGRTLGCVLAWLEDPVISKWVIAALFLSLVLNSYLMKAARWNLRQSEVIPDSSATVSQTKDSSNKLAEKRTVDAMLQEGRVSLLEDEEIVNLCLRGKISAHALEKTMERHPTMSRLEAFTRAVKIRRTVVSRTPSTIDVSSSLEYSKAPFENYDYTLVHGACCENIIGYLPLPVGAAGPLVIDGRNYFIPMATTEGVLVASASRGCKAINAGGGAVTVINADGMTRGPCLAFSSVSRAAEAKQWIDSDEGKKILATAFNSTSRFARLQGLKSAQAGTYLYVRFKSTTGDAMGMNMISKGVEKALEVMKGHGFSDMSTISVTGNYCVDKKPAAINWIDGRGKSVVAEALIPADAVRSVLKTDVDALVELNTAKNLVGSAMAGSIGGFNVHASNLVAAVLLATGQDPAQNVESSSCITIMKNVNNNLHISVSMPCIEVGTIGGGTILEPQAAMLDLLGVRGAHATNPGDNARQLARIVAAAVLAGELSTCAALAAGHLVSAHMAHNRSKVAAKTG</sequence>
<proteinExistence type="inferred from homology"/>
<reference key="1">
    <citation type="journal article" date="2005" name="Nature">
        <title>Genomic sequence of the pathogenic and allergenic filamentous fungus Aspergillus fumigatus.</title>
        <authorList>
            <person name="Nierman W.C."/>
            <person name="Pain A."/>
            <person name="Anderson M.J."/>
            <person name="Wortman J.R."/>
            <person name="Kim H.S."/>
            <person name="Arroyo J."/>
            <person name="Berriman M."/>
            <person name="Abe K."/>
            <person name="Archer D.B."/>
            <person name="Bermejo C."/>
            <person name="Bennett J.W."/>
            <person name="Bowyer P."/>
            <person name="Chen D."/>
            <person name="Collins M."/>
            <person name="Coulsen R."/>
            <person name="Davies R."/>
            <person name="Dyer P.S."/>
            <person name="Farman M.L."/>
            <person name="Fedorova N."/>
            <person name="Fedorova N.D."/>
            <person name="Feldblyum T.V."/>
            <person name="Fischer R."/>
            <person name="Fosker N."/>
            <person name="Fraser A."/>
            <person name="Garcia J.L."/>
            <person name="Garcia M.J."/>
            <person name="Goble A."/>
            <person name="Goldman G.H."/>
            <person name="Gomi K."/>
            <person name="Griffith-Jones S."/>
            <person name="Gwilliam R."/>
            <person name="Haas B.J."/>
            <person name="Haas H."/>
            <person name="Harris D.E."/>
            <person name="Horiuchi H."/>
            <person name="Huang J."/>
            <person name="Humphray S."/>
            <person name="Jimenez J."/>
            <person name="Keller N."/>
            <person name="Khouri H."/>
            <person name="Kitamoto K."/>
            <person name="Kobayashi T."/>
            <person name="Konzack S."/>
            <person name="Kulkarni R."/>
            <person name="Kumagai T."/>
            <person name="Lafton A."/>
            <person name="Latge J.-P."/>
            <person name="Li W."/>
            <person name="Lord A."/>
            <person name="Lu C."/>
            <person name="Majoros W.H."/>
            <person name="May G.S."/>
            <person name="Miller B.L."/>
            <person name="Mohamoud Y."/>
            <person name="Molina M."/>
            <person name="Monod M."/>
            <person name="Mouyna I."/>
            <person name="Mulligan S."/>
            <person name="Murphy L.D."/>
            <person name="O'Neil S."/>
            <person name="Paulsen I."/>
            <person name="Penalva M.A."/>
            <person name="Pertea M."/>
            <person name="Price C."/>
            <person name="Pritchard B.L."/>
            <person name="Quail M.A."/>
            <person name="Rabbinowitsch E."/>
            <person name="Rawlins N."/>
            <person name="Rajandream M.A."/>
            <person name="Reichard U."/>
            <person name="Renauld H."/>
            <person name="Robson G.D."/>
            <person name="Rodriguez de Cordoba S."/>
            <person name="Rodriguez-Pena J.M."/>
            <person name="Ronning C.M."/>
            <person name="Rutter S."/>
            <person name="Salzberg S.L."/>
            <person name="Sanchez M."/>
            <person name="Sanchez-Ferrero J.C."/>
            <person name="Saunders D."/>
            <person name="Seeger K."/>
            <person name="Squares R."/>
            <person name="Squares S."/>
            <person name="Takeuchi M."/>
            <person name="Tekaia F."/>
            <person name="Turner G."/>
            <person name="Vazquez de Aldana C.R."/>
            <person name="Weidman J."/>
            <person name="White O."/>
            <person name="Woodward J.R."/>
            <person name="Yu J.-H."/>
            <person name="Fraser C.M."/>
            <person name="Galagan J.E."/>
            <person name="Asai K."/>
            <person name="Machida M."/>
            <person name="Hall N."/>
            <person name="Barrell B.G."/>
            <person name="Denning D.W."/>
        </authorList>
    </citation>
    <scope>NUCLEOTIDE SEQUENCE [LARGE SCALE GENOMIC DNA]</scope>
    <source>
        <strain>ATCC MYA-4609 / CBS 101355 / FGSC A1100 / Af293</strain>
    </source>
</reference>
<reference key="2">
    <citation type="journal article" date="2005" name="Med. Mycol.">
        <title>The ergosterol biosynthesis pathway, transporter genes, and azole resistance in Aspergillus fumigatus.</title>
        <authorList>
            <person name="Ferreira M.E."/>
            <person name="Colombo A.L."/>
            <person name="Paulsen I."/>
            <person name="Ren Q."/>
            <person name="Wortman J."/>
            <person name="Huang J."/>
            <person name="Goldman M.H."/>
            <person name="Goldman G.H."/>
        </authorList>
    </citation>
    <scope>IDENTIFICATION</scope>
    <scope>FUNCTION</scope>
</reference>
<reference key="3">
    <citation type="journal article" date="2012" name="Proc. Natl. Acad. Sci. U.S.A.">
        <title>Mevalonate governs interdependency of ergosterol and siderophore biosyntheses in the fungal pathogen Aspergillus fumigatus.</title>
        <authorList>
            <person name="Yasmin S."/>
            <person name="Alcazar-Fuoli L."/>
            <person name="Gruendlinger M."/>
            <person name="Puempel T."/>
            <person name="Cairns T."/>
            <person name="Blatzer M."/>
            <person name="Lopez J.F."/>
            <person name="Grimalt J.O."/>
            <person name="Bignell E."/>
            <person name="Haas H."/>
        </authorList>
    </citation>
    <scope>FUNCTION</scope>
</reference>
<evidence type="ECO:0000250" key="1">
    <source>
        <dbReference type="UniProtKB" id="P04035"/>
    </source>
</evidence>
<evidence type="ECO:0000250" key="2">
    <source>
        <dbReference type="UniProtKB" id="Q4WHZ1"/>
    </source>
</evidence>
<evidence type="ECO:0000255" key="3"/>
<evidence type="ECO:0000255" key="4">
    <source>
        <dbReference type="PROSITE-ProRule" id="PRU00199"/>
    </source>
</evidence>
<evidence type="ECO:0000255" key="5">
    <source>
        <dbReference type="PROSITE-ProRule" id="PRU00498"/>
    </source>
</evidence>
<evidence type="ECO:0000255" key="6">
    <source>
        <dbReference type="PROSITE-ProRule" id="PRU10003"/>
    </source>
</evidence>
<evidence type="ECO:0000303" key="7">
    <source>
    </source>
</evidence>
<evidence type="ECO:0000305" key="8"/>
<evidence type="ECO:0000305" key="9">
    <source>
    </source>
</evidence>
<evidence type="ECO:0000305" key="10">
    <source>
    </source>
</evidence>
<keyword id="KW-0256">Endoplasmic reticulum</keyword>
<keyword id="KW-0325">Glycoprotein</keyword>
<keyword id="KW-0444">Lipid biosynthesis</keyword>
<keyword id="KW-0443">Lipid metabolism</keyword>
<keyword id="KW-0472">Membrane</keyword>
<keyword id="KW-0521">NADP</keyword>
<keyword id="KW-0560">Oxidoreductase</keyword>
<keyword id="KW-1185">Reference proteome</keyword>
<keyword id="KW-0752">Steroid biosynthesis</keyword>
<keyword id="KW-0753">Steroid metabolism</keyword>
<keyword id="KW-0756">Sterol biosynthesis</keyword>
<keyword id="KW-1207">Sterol metabolism</keyword>
<keyword id="KW-0812">Transmembrane</keyword>
<keyword id="KW-1133">Transmembrane helix</keyword>